<name>RS4_ECO24</name>
<accession>A7ZSI5</accession>
<protein>
    <recommendedName>
        <fullName evidence="1">Small ribosomal subunit protein uS4</fullName>
    </recommendedName>
    <alternativeName>
        <fullName evidence="2">30S ribosomal protein S4</fullName>
    </alternativeName>
</protein>
<proteinExistence type="inferred from homology"/>
<gene>
    <name evidence="1" type="primary">rpsD</name>
    <name type="ordered locus">EcE24377A_3779</name>
</gene>
<comment type="function">
    <text evidence="1">One of the primary rRNA binding proteins, it binds directly to 16S rRNA where it nucleates assembly of the body of the 30S subunit.</text>
</comment>
<comment type="function">
    <text evidence="1">With S5 and S12 plays an important role in translational accuracy.</text>
</comment>
<comment type="subunit">
    <text evidence="1">Part of the 30S ribosomal subunit. Contacts protein S5. The interaction surface between S4 and S5 is involved in control of translational fidelity.</text>
</comment>
<comment type="similarity">
    <text evidence="1">Belongs to the universal ribosomal protein uS4 family.</text>
</comment>
<evidence type="ECO:0000255" key="1">
    <source>
        <dbReference type="HAMAP-Rule" id="MF_01306"/>
    </source>
</evidence>
<evidence type="ECO:0000305" key="2"/>
<organism>
    <name type="scientific">Escherichia coli O139:H28 (strain E24377A / ETEC)</name>
    <dbReference type="NCBI Taxonomy" id="331111"/>
    <lineage>
        <taxon>Bacteria</taxon>
        <taxon>Pseudomonadati</taxon>
        <taxon>Pseudomonadota</taxon>
        <taxon>Gammaproteobacteria</taxon>
        <taxon>Enterobacterales</taxon>
        <taxon>Enterobacteriaceae</taxon>
        <taxon>Escherichia</taxon>
    </lineage>
</organism>
<keyword id="KW-1185">Reference proteome</keyword>
<keyword id="KW-0687">Ribonucleoprotein</keyword>
<keyword id="KW-0689">Ribosomal protein</keyword>
<keyword id="KW-0694">RNA-binding</keyword>
<keyword id="KW-0699">rRNA-binding</keyword>
<sequence length="206" mass="23469">MARYLGPKLKLSRREGTDLFLKSGVRAIDTKCKIEQAPGQHGARKPRLSDYGVQLREKQKVRRIYGVLERQFRNYYKEAARLKGNTGENLLALLEGRLDNVVYRMGFGATRAEARQLVSHKAIMVNGRVVNIASYQVSPNDVVSIREKAKKQSRVKAALELAEQREKPTWLEVDAGKMEGTFKRKPERSDLSADINEHLIVELYSK</sequence>
<reference key="1">
    <citation type="journal article" date="2008" name="J. Bacteriol.">
        <title>The pangenome structure of Escherichia coli: comparative genomic analysis of E. coli commensal and pathogenic isolates.</title>
        <authorList>
            <person name="Rasko D.A."/>
            <person name="Rosovitz M.J."/>
            <person name="Myers G.S.A."/>
            <person name="Mongodin E.F."/>
            <person name="Fricke W.F."/>
            <person name="Gajer P."/>
            <person name="Crabtree J."/>
            <person name="Sebaihia M."/>
            <person name="Thomson N.R."/>
            <person name="Chaudhuri R."/>
            <person name="Henderson I.R."/>
            <person name="Sperandio V."/>
            <person name="Ravel J."/>
        </authorList>
    </citation>
    <scope>NUCLEOTIDE SEQUENCE [LARGE SCALE GENOMIC DNA]</scope>
    <source>
        <strain>E24377A / ETEC</strain>
    </source>
</reference>
<feature type="chain" id="PRO_0000322297" description="Small ribosomal subunit protein uS4">
    <location>
        <begin position="1"/>
        <end position="206"/>
    </location>
</feature>
<feature type="domain" description="S4 RNA-binding" evidence="1">
    <location>
        <begin position="96"/>
        <end position="156"/>
    </location>
</feature>
<dbReference type="EMBL" id="CP000800">
    <property type="protein sequence ID" value="ABV18530.1"/>
    <property type="molecule type" value="Genomic_DNA"/>
</dbReference>
<dbReference type="RefSeq" id="WP_000135224.1">
    <property type="nucleotide sequence ID" value="NC_009801.1"/>
</dbReference>
<dbReference type="SMR" id="A7ZSI5"/>
<dbReference type="GeneID" id="93778691"/>
<dbReference type="KEGG" id="ecw:EcE24377A_3779"/>
<dbReference type="HOGENOM" id="CLU_092403_0_2_6"/>
<dbReference type="Proteomes" id="UP000001122">
    <property type="component" value="Chromosome"/>
</dbReference>
<dbReference type="GO" id="GO:0015935">
    <property type="term" value="C:small ribosomal subunit"/>
    <property type="evidence" value="ECO:0007669"/>
    <property type="project" value="InterPro"/>
</dbReference>
<dbReference type="GO" id="GO:0019843">
    <property type="term" value="F:rRNA binding"/>
    <property type="evidence" value="ECO:0007669"/>
    <property type="project" value="UniProtKB-UniRule"/>
</dbReference>
<dbReference type="GO" id="GO:0003735">
    <property type="term" value="F:structural constituent of ribosome"/>
    <property type="evidence" value="ECO:0007669"/>
    <property type="project" value="InterPro"/>
</dbReference>
<dbReference type="GO" id="GO:0042274">
    <property type="term" value="P:ribosomal small subunit biogenesis"/>
    <property type="evidence" value="ECO:0007669"/>
    <property type="project" value="TreeGrafter"/>
</dbReference>
<dbReference type="GO" id="GO:0006412">
    <property type="term" value="P:translation"/>
    <property type="evidence" value="ECO:0007669"/>
    <property type="project" value="UniProtKB-UniRule"/>
</dbReference>
<dbReference type="CDD" id="cd00165">
    <property type="entry name" value="S4"/>
    <property type="match status" value="1"/>
</dbReference>
<dbReference type="FunFam" id="1.10.1050.10:FF:000001">
    <property type="entry name" value="30S ribosomal protein S4"/>
    <property type="match status" value="1"/>
</dbReference>
<dbReference type="FunFam" id="3.10.290.10:FF:000001">
    <property type="entry name" value="30S ribosomal protein S4"/>
    <property type="match status" value="1"/>
</dbReference>
<dbReference type="Gene3D" id="1.10.1050.10">
    <property type="entry name" value="Ribosomal Protein S4 Delta 41, Chain A, domain 1"/>
    <property type="match status" value="1"/>
</dbReference>
<dbReference type="Gene3D" id="3.10.290.10">
    <property type="entry name" value="RNA-binding S4 domain"/>
    <property type="match status" value="1"/>
</dbReference>
<dbReference type="HAMAP" id="MF_01306_B">
    <property type="entry name" value="Ribosomal_uS4_B"/>
    <property type="match status" value="1"/>
</dbReference>
<dbReference type="InterPro" id="IPR022801">
    <property type="entry name" value="Ribosomal_uS4"/>
</dbReference>
<dbReference type="InterPro" id="IPR005709">
    <property type="entry name" value="Ribosomal_uS4_bac-type"/>
</dbReference>
<dbReference type="InterPro" id="IPR018079">
    <property type="entry name" value="Ribosomal_uS4_CS"/>
</dbReference>
<dbReference type="InterPro" id="IPR001912">
    <property type="entry name" value="Ribosomal_uS4_N"/>
</dbReference>
<dbReference type="InterPro" id="IPR002942">
    <property type="entry name" value="S4_RNA-bd"/>
</dbReference>
<dbReference type="InterPro" id="IPR036986">
    <property type="entry name" value="S4_RNA-bd_sf"/>
</dbReference>
<dbReference type="NCBIfam" id="NF003717">
    <property type="entry name" value="PRK05327.1"/>
    <property type="match status" value="1"/>
</dbReference>
<dbReference type="NCBIfam" id="TIGR01017">
    <property type="entry name" value="rpsD_bact"/>
    <property type="match status" value="1"/>
</dbReference>
<dbReference type="PANTHER" id="PTHR11831">
    <property type="entry name" value="30S 40S RIBOSOMAL PROTEIN"/>
    <property type="match status" value="1"/>
</dbReference>
<dbReference type="PANTHER" id="PTHR11831:SF4">
    <property type="entry name" value="SMALL RIBOSOMAL SUBUNIT PROTEIN US4M"/>
    <property type="match status" value="1"/>
</dbReference>
<dbReference type="Pfam" id="PF00163">
    <property type="entry name" value="Ribosomal_S4"/>
    <property type="match status" value="1"/>
</dbReference>
<dbReference type="Pfam" id="PF01479">
    <property type="entry name" value="S4"/>
    <property type="match status" value="1"/>
</dbReference>
<dbReference type="SMART" id="SM01390">
    <property type="entry name" value="Ribosomal_S4"/>
    <property type="match status" value="1"/>
</dbReference>
<dbReference type="SMART" id="SM00363">
    <property type="entry name" value="S4"/>
    <property type="match status" value="1"/>
</dbReference>
<dbReference type="SUPFAM" id="SSF55174">
    <property type="entry name" value="Alpha-L RNA-binding motif"/>
    <property type="match status" value="1"/>
</dbReference>
<dbReference type="PROSITE" id="PS00632">
    <property type="entry name" value="RIBOSOMAL_S4"/>
    <property type="match status" value="1"/>
</dbReference>
<dbReference type="PROSITE" id="PS50889">
    <property type="entry name" value="S4"/>
    <property type="match status" value="1"/>
</dbReference>